<accession>A0A3G9H990</accession>
<dbReference type="EC" id="2.3.1.-" evidence="6"/>
<dbReference type="EMBL" id="AB969680">
    <property type="protein sequence ID" value="BBG74267.1"/>
    <property type="molecule type" value="Genomic_DNA"/>
</dbReference>
<dbReference type="SMR" id="A0A3G9H990"/>
<dbReference type="VEuPathDB" id="FungiDB:CC77DRAFT_1012953"/>
<dbReference type="GO" id="GO:0004315">
    <property type="term" value="F:3-oxoacyl-[acyl-carrier-protein] synthase activity"/>
    <property type="evidence" value="ECO:0007669"/>
    <property type="project" value="InterPro"/>
</dbReference>
<dbReference type="GO" id="GO:0004312">
    <property type="term" value="F:fatty acid synthase activity"/>
    <property type="evidence" value="ECO:0007669"/>
    <property type="project" value="TreeGrafter"/>
</dbReference>
<dbReference type="GO" id="GO:0008168">
    <property type="term" value="F:methyltransferase activity"/>
    <property type="evidence" value="ECO:0007669"/>
    <property type="project" value="UniProtKB-KW"/>
</dbReference>
<dbReference type="GO" id="GO:0016491">
    <property type="term" value="F:oxidoreductase activity"/>
    <property type="evidence" value="ECO:0007669"/>
    <property type="project" value="UniProtKB-KW"/>
</dbReference>
<dbReference type="GO" id="GO:0031177">
    <property type="term" value="F:phosphopantetheine binding"/>
    <property type="evidence" value="ECO:0007669"/>
    <property type="project" value="InterPro"/>
</dbReference>
<dbReference type="GO" id="GO:0006633">
    <property type="term" value="P:fatty acid biosynthetic process"/>
    <property type="evidence" value="ECO:0007669"/>
    <property type="project" value="InterPro"/>
</dbReference>
<dbReference type="GO" id="GO:0032259">
    <property type="term" value="P:methylation"/>
    <property type="evidence" value="ECO:0007669"/>
    <property type="project" value="UniProtKB-KW"/>
</dbReference>
<dbReference type="GO" id="GO:0044550">
    <property type="term" value="P:secondary metabolite biosynthetic process"/>
    <property type="evidence" value="ECO:0007669"/>
    <property type="project" value="UniProtKB-ARBA"/>
</dbReference>
<dbReference type="CDD" id="cd02440">
    <property type="entry name" value="AdoMet_MTases"/>
    <property type="match status" value="1"/>
</dbReference>
<dbReference type="CDD" id="cd05195">
    <property type="entry name" value="enoyl_red"/>
    <property type="match status" value="1"/>
</dbReference>
<dbReference type="CDD" id="cd00833">
    <property type="entry name" value="PKS"/>
    <property type="match status" value="1"/>
</dbReference>
<dbReference type="FunFam" id="3.40.50.720:FF:000209">
    <property type="entry name" value="Polyketide synthase Pks12"/>
    <property type="match status" value="1"/>
</dbReference>
<dbReference type="Gene3D" id="3.30.70.3290">
    <property type="match status" value="1"/>
</dbReference>
<dbReference type="Gene3D" id="3.40.47.10">
    <property type="match status" value="1"/>
</dbReference>
<dbReference type="Gene3D" id="1.10.1200.10">
    <property type="entry name" value="ACP-like"/>
    <property type="match status" value="1"/>
</dbReference>
<dbReference type="Gene3D" id="3.40.366.10">
    <property type="entry name" value="Malonyl-Coenzyme A Acyl Carrier Protein, domain 2"/>
    <property type="match status" value="1"/>
</dbReference>
<dbReference type="Gene3D" id="3.90.180.10">
    <property type="entry name" value="Medium-chain alcohol dehydrogenases, catalytic domain"/>
    <property type="match status" value="1"/>
</dbReference>
<dbReference type="Gene3D" id="3.40.50.720">
    <property type="entry name" value="NAD(P)-binding Rossmann-like Domain"/>
    <property type="match status" value="3"/>
</dbReference>
<dbReference type="Gene3D" id="3.10.129.110">
    <property type="entry name" value="Polyketide synthase dehydratase"/>
    <property type="match status" value="1"/>
</dbReference>
<dbReference type="Gene3D" id="3.40.50.150">
    <property type="entry name" value="Vaccinia Virus protein VP39"/>
    <property type="match status" value="1"/>
</dbReference>
<dbReference type="InterPro" id="IPR001227">
    <property type="entry name" value="Ac_transferase_dom_sf"/>
</dbReference>
<dbReference type="InterPro" id="IPR036736">
    <property type="entry name" value="ACP-like_sf"/>
</dbReference>
<dbReference type="InterPro" id="IPR014043">
    <property type="entry name" value="Acyl_transferase_dom"/>
</dbReference>
<dbReference type="InterPro" id="IPR016035">
    <property type="entry name" value="Acyl_Trfase/lysoPLipase"/>
</dbReference>
<dbReference type="InterPro" id="IPR013154">
    <property type="entry name" value="ADH-like_N"/>
</dbReference>
<dbReference type="InterPro" id="IPR011032">
    <property type="entry name" value="GroES-like_sf"/>
</dbReference>
<dbReference type="InterPro" id="IPR018201">
    <property type="entry name" value="Ketoacyl_synth_AS"/>
</dbReference>
<dbReference type="InterPro" id="IPR014031">
    <property type="entry name" value="Ketoacyl_synth_C"/>
</dbReference>
<dbReference type="InterPro" id="IPR014030">
    <property type="entry name" value="Ketoacyl_synth_N"/>
</dbReference>
<dbReference type="InterPro" id="IPR016036">
    <property type="entry name" value="Malonyl_transacylase_ACP-bd"/>
</dbReference>
<dbReference type="InterPro" id="IPR013217">
    <property type="entry name" value="Methyltransf_12"/>
</dbReference>
<dbReference type="InterPro" id="IPR036291">
    <property type="entry name" value="NAD(P)-bd_dom_sf"/>
</dbReference>
<dbReference type="InterPro" id="IPR032821">
    <property type="entry name" value="PKS_assoc"/>
</dbReference>
<dbReference type="InterPro" id="IPR020841">
    <property type="entry name" value="PKS_Beta-ketoAc_synthase_dom"/>
</dbReference>
<dbReference type="InterPro" id="IPR042104">
    <property type="entry name" value="PKS_dehydratase_sf"/>
</dbReference>
<dbReference type="InterPro" id="IPR020807">
    <property type="entry name" value="PKS_DH"/>
</dbReference>
<dbReference type="InterPro" id="IPR049551">
    <property type="entry name" value="PKS_DH_C"/>
</dbReference>
<dbReference type="InterPro" id="IPR049552">
    <property type="entry name" value="PKS_DH_N"/>
</dbReference>
<dbReference type="InterPro" id="IPR020843">
    <property type="entry name" value="PKS_ER"/>
</dbReference>
<dbReference type="InterPro" id="IPR013968">
    <property type="entry name" value="PKS_KR"/>
</dbReference>
<dbReference type="InterPro" id="IPR049900">
    <property type="entry name" value="PKS_mFAS_DH"/>
</dbReference>
<dbReference type="InterPro" id="IPR050091">
    <property type="entry name" value="PKS_NRPS_Biosynth_Enz"/>
</dbReference>
<dbReference type="InterPro" id="IPR020806">
    <property type="entry name" value="PKS_PP-bd"/>
</dbReference>
<dbReference type="InterPro" id="IPR009081">
    <property type="entry name" value="PP-bd_ACP"/>
</dbReference>
<dbReference type="InterPro" id="IPR006162">
    <property type="entry name" value="Ppantetheine_attach_site"/>
</dbReference>
<dbReference type="InterPro" id="IPR029063">
    <property type="entry name" value="SAM-dependent_MTases_sf"/>
</dbReference>
<dbReference type="InterPro" id="IPR016039">
    <property type="entry name" value="Thiolase-like"/>
</dbReference>
<dbReference type="PANTHER" id="PTHR43775">
    <property type="entry name" value="FATTY ACID SYNTHASE"/>
    <property type="match status" value="1"/>
</dbReference>
<dbReference type="PANTHER" id="PTHR43775:SF49">
    <property type="entry name" value="SYNTHASE, PUTATIVE (JCVI)-RELATED"/>
    <property type="match status" value="1"/>
</dbReference>
<dbReference type="Pfam" id="PF23297">
    <property type="entry name" value="ACP_SdgA_C"/>
    <property type="match status" value="1"/>
</dbReference>
<dbReference type="Pfam" id="PF00698">
    <property type="entry name" value="Acyl_transf_1"/>
    <property type="match status" value="1"/>
</dbReference>
<dbReference type="Pfam" id="PF08240">
    <property type="entry name" value="ADH_N"/>
    <property type="match status" value="1"/>
</dbReference>
<dbReference type="Pfam" id="PF13602">
    <property type="entry name" value="ADH_zinc_N_2"/>
    <property type="match status" value="1"/>
</dbReference>
<dbReference type="Pfam" id="PF16197">
    <property type="entry name" value="KAsynt_C_assoc"/>
    <property type="match status" value="1"/>
</dbReference>
<dbReference type="Pfam" id="PF00109">
    <property type="entry name" value="ketoacyl-synt"/>
    <property type="match status" value="1"/>
</dbReference>
<dbReference type="Pfam" id="PF02801">
    <property type="entry name" value="Ketoacyl-synt_C"/>
    <property type="match status" value="1"/>
</dbReference>
<dbReference type="Pfam" id="PF08659">
    <property type="entry name" value="KR"/>
    <property type="match status" value="1"/>
</dbReference>
<dbReference type="Pfam" id="PF08242">
    <property type="entry name" value="Methyltransf_12"/>
    <property type="match status" value="1"/>
</dbReference>
<dbReference type="Pfam" id="PF21089">
    <property type="entry name" value="PKS_DH_N"/>
    <property type="match status" value="1"/>
</dbReference>
<dbReference type="Pfam" id="PF14765">
    <property type="entry name" value="PS-DH"/>
    <property type="match status" value="1"/>
</dbReference>
<dbReference type="SMART" id="SM00827">
    <property type="entry name" value="PKS_AT"/>
    <property type="match status" value="1"/>
</dbReference>
<dbReference type="SMART" id="SM00826">
    <property type="entry name" value="PKS_DH"/>
    <property type="match status" value="1"/>
</dbReference>
<dbReference type="SMART" id="SM00829">
    <property type="entry name" value="PKS_ER"/>
    <property type="match status" value="1"/>
</dbReference>
<dbReference type="SMART" id="SM00822">
    <property type="entry name" value="PKS_KR"/>
    <property type="match status" value="1"/>
</dbReference>
<dbReference type="SMART" id="SM00825">
    <property type="entry name" value="PKS_KS"/>
    <property type="match status" value="1"/>
</dbReference>
<dbReference type="SMART" id="SM00823">
    <property type="entry name" value="PKS_PP"/>
    <property type="match status" value="1"/>
</dbReference>
<dbReference type="SUPFAM" id="SSF47336">
    <property type="entry name" value="ACP-like"/>
    <property type="match status" value="1"/>
</dbReference>
<dbReference type="SUPFAM" id="SSF52151">
    <property type="entry name" value="FabD/lysophospholipase-like"/>
    <property type="match status" value="1"/>
</dbReference>
<dbReference type="SUPFAM" id="SSF50129">
    <property type="entry name" value="GroES-like"/>
    <property type="match status" value="1"/>
</dbReference>
<dbReference type="SUPFAM" id="SSF51735">
    <property type="entry name" value="NAD(P)-binding Rossmann-fold domains"/>
    <property type="match status" value="2"/>
</dbReference>
<dbReference type="SUPFAM" id="SSF55048">
    <property type="entry name" value="Probable ACP-binding domain of malonyl-CoA ACP transacylase"/>
    <property type="match status" value="1"/>
</dbReference>
<dbReference type="SUPFAM" id="SSF53335">
    <property type="entry name" value="S-adenosyl-L-methionine-dependent methyltransferases"/>
    <property type="match status" value="1"/>
</dbReference>
<dbReference type="SUPFAM" id="SSF53901">
    <property type="entry name" value="Thiolase-like"/>
    <property type="match status" value="1"/>
</dbReference>
<dbReference type="PROSITE" id="PS50075">
    <property type="entry name" value="CARRIER"/>
    <property type="match status" value="1"/>
</dbReference>
<dbReference type="PROSITE" id="PS00606">
    <property type="entry name" value="KS3_1"/>
    <property type="match status" value="1"/>
</dbReference>
<dbReference type="PROSITE" id="PS52004">
    <property type="entry name" value="KS3_2"/>
    <property type="match status" value="1"/>
</dbReference>
<dbReference type="PROSITE" id="PS00012">
    <property type="entry name" value="PHOSPHOPANTETHEINE"/>
    <property type="match status" value="1"/>
</dbReference>
<dbReference type="PROSITE" id="PS52019">
    <property type="entry name" value="PKS_MFAS_DH"/>
    <property type="match status" value="1"/>
</dbReference>
<evidence type="ECO:0000255" key="1"/>
<evidence type="ECO:0000255" key="2">
    <source>
        <dbReference type="PROSITE-ProRule" id="PRU00258"/>
    </source>
</evidence>
<evidence type="ECO:0000255" key="3">
    <source>
        <dbReference type="PROSITE-ProRule" id="PRU01348"/>
    </source>
</evidence>
<evidence type="ECO:0000255" key="4">
    <source>
        <dbReference type="PROSITE-ProRule" id="PRU01363"/>
    </source>
</evidence>
<evidence type="ECO:0000256" key="5">
    <source>
        <dbReference type="SAM" id="MobiDB-lite"/>
    </source>
</evidence>
<evidence type="ECO:0000269" key="6">
    <source>
    </source>
</evidence>
<evidence type="ECO:0000269" key="7">
    <source>
    </source>
</evidence>
<evidence type="ECO:0000269" key="8">
    <source>
    </source>
</evidence>
<evidence type="ECO:0000269" key="9">
    <source ref="5"/>
</evidence>
<evidence type="ECO:0000303" key="10">
    <source>
    </source>
</evidence>
<evidence type="ECO:0000305" key="11">
    <source>
    </source>
</evidence>
<evidence type="ECO:0000305" key="12">
    <source>
    </source>
</evidence>
<gene>
    <name evidence="10" type="primary">ALT1</name>
</gene>
<protein>
    <recommendedName>
        <fullName evidence="10">Highly reducing polyketide synthase ALT1</fullName>
        <shortName evidence="10">HR-PKS FUM1</shortName>
        <ecNumber evidence="6">2.3.1.-</ecNumber>
    </recommendedName>
    <alternativeName>
        <fullName evidence="10">AAL-toxin biosynthesis cluster protein 1</fullName>
    </alternativeName>
</protein>
<comment type="function">
    <text evidence="6 7 8 9 12">Highly reducing polyketide synthase; part of the gene cluster that mediates the biosynthesis of the host-selective toxins (HSTs) AAL-toxins, sphinganine-analog mycotoxins responsible for Alternaria stem canker on tomato by the tomato pathotype (PubMed:18435561, PubMed:19449880, PubMed:19749175). The biosynthesis starts with the polyketide synthase ALT1-catalyzed C-16 carbon chain assembly from one starter acetyl-CoA unit with malonyl-CoA extender units (PubMed:18435561, PubMed:19449880). ALT1 also selectively transfers methyl groups at the first and the third cycle of chain elongation for AAL toxin (PubMed:19449880). The C-16 polyketide chain is released from the enzyme by a nucleophilic attack of a carbanion, which is derived from R-carbon of glycin by decarboxylation, on the carbonyl carbon of polyketide acyl chain (Probable). This step is probably catalyzed by a pyridoxal 5'-phosphate-dependent aminoacyl transferase ALT4 (Probable). The respective functions of the other enzymes encoded by the cluster have still to be elucidated (Probable). The sphingosine N-acyltransferase-like protein ALT7 seems not to act as a resistance/self-tolerance factor against the toxin in the toxin biosynthetic gene cluster, contrary to what is expected (Ref.5).</text>
</comment>
<comment type="pathway">
    <text evidence="6 7">Mycotoxin biosynthesis.</text>
</comment>
<comment type="domain">
    <text evidence="11">Multidomain protein; including a ketosynthase (KS) that catalyzes repeated decarboxylative condensation to elongate the polyketide backbone; a malonyl-CoA:ACP transacylase (MAT) that selects and transfers the extender unit malonyl-CoA; a dehydratase (DH) domain that reduces hydroxyl groups to enoyl groups; a methyltransferase (CMeT) domain responsible for the incorporation of methyl groups; an enoylreductase (ER) domain that reduces enoyl groups to alkyl group; a ketoreductase (KR) domain that catalyzes beta-ketoreduction steps; and an acyl-carrier protein (ACP) that serves as the tether of the growing and completed polyketide via its phosphopantetheinyl arm.</text>
</comment>
<comment type="miscellaneous">
    <text evidence="8">Gene clusters encoding host-selective toxins (HSTs) are localized on conditionally dispensable chromosomes (CDCs), also called supernumerary chromosomes, where they are present in multiple copies. The CDCs are not essential for saprophytic growth but controls host-selective pathogenicity.</text>
</comment>
<sequence length="2624" mass="284432">MAIVTAFEDEPINGNGMLNAPSISPDPVLPLAIVGMGMRLPGAIHTPEHLWQTLVNKRSTRCEIPDTRFSTNGFHSPSAKPGSIAMRHGHFLADSDSLHHLDPSFFSMGMNEAVDIDPQQRLLLEVVYECMESSGQVNWQGSKIGCWVGVWGEDWLDLHAKDTFDSGMFRIAGGHDFAISNRISYEYNLKGPSYTIKAGCSSSLIALHEAVRALRAGDCDGAIVAGTNLIFSPTMSIGMTEQGVLSPDASCKSFDANANGYARGEAINAIYLKRLDVALQNGDSVRAVVRGTSSNSDGKTPGMSMPSSESHISLIRQAYREAGLDPAQTPFVEAHGTGTPVGDPLEAIAIARVFGGRDRTLYLGSVKPNLGHSEGASGISSILKAIQAMEHRTIPPNLNFNVPNPKIPFAESNMVVPCASVPWPEGQPVRVSVNSFGIGGSNAHCILESVEEYLGAHGAPWMPIGTRLSNTYTSCFPRLNFNKTDGGISTTSLSARSVNGMTNLIVHSTDEEMMQSPAVQARESYSNHHTLTETTNPSNNTATNGVVGYQPRKLLYVVSAGNATSLTAKIMDLHRYHQDHQAQAVDVAYTLCNRRDHLTHRTYAIASAQPSEGCLSDPALEFSPPAKINTTTPSHAVMVFTGQGAQWAGMASELVSDYPVFRATVSRLSRVLSQLEHAPAWNLLEELRKPEATSRIGEAEFSQPLVCAVQVGLVDLLRHWGLSAAAVIGHSSGEIGAAYAADAITADEAITIAYYRGYVNKSHTRQGGMAAIGLGVSQVAPFLSEGVTIACDNSPQSATISGDKDVLRDVCSMIRRKQPDCLVRELKVPAAYHSHHMLDLGGTLESLLKGKVHSQAPAIPFFSSVKVKEIREPGSLDAAYWRENLESPVQFTGALKILLAAQPSLSRTVFVEIGPHSALAGPLRQIFKAHGTGQEGYTPAMIRGKDCVDSVLSLVGDLFLQGITLDLSRISPPANVITDLPLYPWNHEKEFWSESRVGRDWRFRKYPNHELLGSQTLESSKLQPQWRNMLKLEHVPWLRDHQVMNDTIFPCAGYLAMAVEAVRQATEAADVEGFSLRNVVVRAALVVTESKPVELLTALQPVRLTNTLDSVWWEFSIMSHNGSVWQKHCNGQVRPGRDAHHIKAAFSEQAVVSRDKQYPRPVDSLYSELYRLGLRYGPAFCGLNKVHCQPGGKQASAILMETIVSESSYAIHPTTIDHCLQLLFPASCEGIFYRAEKLCVPTGIDNLYLADGKTRESEGARIEASSVARSGGAIFGAAKAFSKIDDALLLSLEGGKFSPIEVDDGIVEDLDPLASAHLVWKPHLDFADMHDLIRPNQDLINDRHNIDLVERLTLVAMMFIQERMGSVSSPANLDHIARFRNWIDAQVAGLKNGTYSGLEKDVEELLSLKPNDRLPLLKELEQIIIQSAPASTAVLICRIIDRCDDILQGRIDGIEVLQADNGLTNFYNYIESRTESVDFLTAAGHTQPTLRILEIGAGTGGASQVVLDSLTNQAEHSRLYSTYAYTDVSAGFFVAARERFKKYPALDFRVLDISKDPLEQGFHASSFDLIIANNVLHATPFLSQTLANVRKLLAPEGYLFLQELSPKMRMVNLIMGILPGWWLGAAEGRSEEPYLSPEQWDSLLRQTGFSSVDVVYDAPSPYQVNANIIARAASEPQARDEKSNGALGAPKAVLLHAPGDEVSERAAQIRSSLEESGLDTSLISIEQFQANATDTQGIIVSLLDLTTPFFASMSASKLTAIQSLVANLGSAHMMWILPRAQKDVSCSDDPAYGMSLGLIRTLRSERSVAITTVEVDTFDNAAFSAVARLAIKLAHQQQGDRTSISSGSDLDPDREFVLTKGVLETGRFHPVSLTHEMAAHAPASEATTLRIGRAGLLQTLKWVDLAIKEPEHNEVVVEPRCVGLNFRDVLVCMGIVEANDVSIGLEGSGVVRKVGNGVTGLQAGDRVFYMADNCFSSQITISALRCVKIPSSLSFEQAATMPCVYATVIHSLLDMGGLQSGQSVLIHSACGGIGIAALNLCRAMPGVEVYVTVGSEEKVQYLMQEFGLAREQIFHSRDTSFVEDVRAATGGRGVDVVLNSLSGELLHASWECVAPYGKMLEIGKRDFIGKAQLAMDLFEANRSFIGIDLARFDAARCGRLLQRTIDMYVAGAIQPVAPIKVFGATEAEASFRYMQKGTHLGKIVVSIGKAAAAAATTRQAVPTQLNPVATYVLVGGLGGLGRAVATWMVERGARHLLFLSRSAGQQAAHQAFFTELQCQGCSAQAVQGDVTLLGDVERALAAAPAGKPVRGILQMAMVLRDKAFADMDLADWHDTVTAKVLGTWNLHRAAPADMDFFLATGSISGLFGLPGQANYAAANSYLTALVQHRRAHGMPASVVHIGMIEDVGYLAENPARADALRAAGGFFLRTRQLLQAIDWALAPPSHKPHHLDHELAIGLRTTKPLLDPGNRVVWRSDPRMGLYHNLTATVATTADDGSDDSDALRFFITSITAEPALLDDPASLDLVTRTIGTRIYTFMLHPLDDIDSTASLTALGVDSLVTIELRNWIKRNFAGLDFSTLEILDARTIAGLAKLILDALKARFGSSTADQQRLQSDYLNMKAP</sequence>
<feature type="chain" id="PRO_0000449847" description="Highly reducing polyketide synthase ALT1">
    <location>
        <begin position="1"/>
        <end position="2624"/>
    </location>
</feature>
<feature type="domain" description="Ketosynthase family 3 (KS3)" evidence="3 11">
    <location>
        <begin position="28"/>
        <end position="449"/>
    </location>
</feature>
<feature type="domain" description="PKS/mFAS DH" evidence="4">
    <location>
        <begin position="1009"/>
        <end position="1306"/>
    </location>
</feature>
<feature type="domain" description="Carrier" evidence="2 11">
    <location>
        <begin position="2522"/>
        <end position="2600"/>
    </location>
</feature>
<feature type="region of interest" description="Disordered" evidence="5">
    <location>
        <begin position="289"/>
        <end position="308"/>
    </location>
</feature>
<feature type="region of interest" description="Disordered" evidence="5">
    <location>
        <begin position="523"/>
        <end position="545"/>
    </location>
</feature>
<feature type="region of interest" description="Malonyl-CoA:ACP transacylase (MAT) domain" evidence="1 11">
    <location>
        <begin position="639"/>
        <end position="945"/>
    </location>
</feature>
<feature type="region of interest" description="Dehydratase (DH) domain" evidence="1 11">
    <location>
        <begin position="1009"/>
        <end position="1301"/>
    </location>
</feature>
<feature type="region of interest" description="N-terminal hotdog fold" evidence="4">
    <location>
        <begin position="1009"/>
        <end position="1140"/>
    </location>
</feature>
<feature type="region of interest" description="C-terminal hotdog fold" evidence="4">
    <location>
        <begin position="1157"/>
        <end position="1306"/>
    </location>
</feature>
<feature type="region of interest" description="Methyltransferase (CMet) domain" evidence="1 11">
    <location>
        <begin position="1493"/>
        <end position="1599"/>
    </location>
</feature>
<feature type="region of interest" description="Enoyl reductase (ER) (ER) domain" evidence="1 11">
    <location>
        <begin position="1895"/>
        <end position="2205"/>
    </location>
</feature>
<feature type="region of interest" description="Ketoreductase (KR) domain" evidence="1 11">
    <location>
        <begin position="2230"/>
        <end position="2509"/>
    </location>
</feature>
<feature type="compositionally biased region" description="Polar residues" evidence="5">
    <location>
        <begin position="523"/>
        <end position="544"/>
    </location>
</feature>
<feature type="active site" description="For beta-ketoacyl synthase activity" evidence="3">
    <location>
        <position position="200"/>
    </location>
</feature>
<feature type="active site" description="For beta-ketoacyl synthase activity" evidence="3">
    <location>
        <position position="335"/>
    </location>
</feature>
<feature type="active site" description="For beta-ketoacyl synthase activity" evidence="3">
    <location>
        <position position="372"/>
    </location>
</feature>
<feature type="active site" description="Proton acceptor; for dehydratase activity" evidence="4">
    <location>
        <position position="1041"/>
    </location>
</feature>
<feature type="active site" description="Proton donor; for dehydratase activity" evidence="4">
    <location>
        <position position="1217"/>
    </location>
</feature>
<feature type="modified residue" description="O-(pantetheine 4'-phosphoryl)serine" evidence="2">
    <location>
        <position position="2559"/>
    </location>
</feature>
<organism>
    <name type="scientific">Alternaria alternata</name>
    <name type="common">Alternaria rot fungus</name>
    <name type="synonym">Torula alternata</name>
    <dbReference type="NCBI Taxonomy" id="5599"/>
    <lineage>
        <taxon>Eukaryota</taxon>
        <taxon>Fungi</taxon>
        <taxon>Dikarya</taxon>
        <taxon>Ascomycota</taxon>
        <taxon>Pezizomycotina</taxon>
        <taxon>Dothideomycetes</taxon>
        <taxon>Pleosporomycetidae</taxon>
        <taxon>Pleosporales</taxon>
        <taxon>Pleosporineae</taxon>
        <taxon>Pleosporaceae</taxon>
        <taxon>Alternaria</taxon>
        <taxon>Alternaria sect. Alternaria</taxon>
        <taxon>Alternaria alternata complex</taxon>
    </lineage>
</organism>
<proteinExistence type="evidence at protein level"/>
<keyword id="KW-0012">Acyltransferase</keyword>
<keyword id="KW-0489">Methyltransferase</keyword>
<keyword id="KW-0511">Multifunctional enzyme</keyword>
<keyword id="KW-0521">NADP</keyword>
<keyword id="KW-0560">Oxidoreductase</keyword>
<keyword id="KW-0596">Phosphopantetheine</keyword>
<keyword id="KW-0597">Phosphoprotein</keyword>
<keyword id="KW-0808">Transferase</keyword>
<name>ALT1_ALTAL</name>
<reference key="1">
    <citation type="submission" date="2014-06" db="EMBL/GenBank/DDBJ databases">
        <title>AAL-toxin biosynthetic genes cluster in the tomato pathotype of Alternaria alternata.</title>
        <authorList>
            <person name="Akagi Y."/>
            <person name="Akamatsu H."/>
            <person name="Takao K."/>
            <person name="Tsuge T."/>
            <person name="Kodama M."/>
        </authorList>
    </citation>
    <scope>NUCLEOTIDE SEQUENCE [GENOMIC DNA]</scope>
    <source>
        <strain>As-27</strain>
    </source>
</reference>
<reference key="2">
    <citation type="journal article" date="2008" name="J. Nat. Prod.">
        <title>Functional complementation of fumonisin biosynthesis in FUM1-disrupted fusarium verticillioides by the AAL-toxin polyketide synthase gene ALT1 from Alternaria alternata f. sp. Lycopersici.</title>
        <authorList>
            <person name="Zhu X."/>
            <person name="Vogeler C."/>
            <person name="Du L."/>
        </authorList>
    </citation>
    <scope>FUNCTION</scope>
    <scope>CATALYTIC ACTIVITY</scope>
    <scope>DOMAIN</scope>
    <scope>PATHWAY</scope>
</reference>
<reference key="3">
    <citation type="journal article" date="2009" name="Eukaryot. Cell">
        <title>Horizontal chromosome transfer, a mechanism for the evolution and differentiation of a plant-pathogenic fungus.</title>
        <authorList>
            <person name="Akagi Y."/>
            <person name="Akamatsu H."/>
            <person name="Otani H."/>
            <person name="Kodama M."/>
        </authorList>
    </citation>
    <scope>FUNCTION</scope>
</reference>
<reference key="4">
    <citation type="journal article" date="2009" name="J. Nat. Prod.">
        <title>Introduction of the AAL-toxin polyketide synthase gene ALT1 into FUM1-disrupted Fusarium verticillioides produces metabolites with the fumonisin methylation pattern.</title>
        <authorList>
            <person name="Li Y."/>
            <person name="Shen Y."/>
            <person name="Zhu X."/>
            <person name="Du L."/>
        </authorList>
    </citation>
    <scope>FUNCTION</scope>
    <scope>CATALYTIC ACTIVITY</scope>
    <scope>DOMAIN</scope>
    <scope>PATHWAY</scope>
</reference>
<reference key="5">
    <citation type="journal article" date="2012" name="J. Plant Pathol. Microbiol.">
        <title>Functional analysis of the ceramide synthase gene ALT7, a homolog of the disease resistance gene Asc1, in the plant pathogen Alternaria alternata.</title>
        <authorList>
            <person name="Kheder A.A."/>
            <person name="Akagi Y."/>
            <person name="Tsuge T."/>
            <person name="Kodama M."/>
        </authorList>
    </citation>
    <scope>FUNCTION</scope>
</reference>